<evidence type="ECO:0000255" key="1">
    <source>
        <dbReference type="HAMAP-Rule" id="MF_01633"/>
    </source>
</evidence>
<comment type="function">
    <text evidence="1">Catalyzes the ATP-dependent conversion of 7-carboxy-7-deazaguanine (CDG) to 7-cyano-7-deazaguanine (preQ(0)).</text>
</comment>
<comment type="catalytic activity">
    <reaction evidence="1">
        <text>7-carboxy-7-deazaguanine + NH4(+) + ATP = 7-cyano-7-deazaguanine + ADP + phosphate + H2O + H(+)</text>
        <dbReference type="Rhea" id="RHEA:27982"/>
        <dbReference type="ChEBI" id="CHEBI:15377"/>
        <dbReference type="ChEBI" id="CHEBI:15378"/>
        <dbReference type="ChEBI" id="CHEBI:28938"/>
        <dbReference type="ChEBI" id="CHEBI:30616"/>
        <dbReference type="ChEBI" id="CHEBI:43474"/>
        <dbReference type="ChEBI" id="CHEBI:45075"/>
        <dbReference type="ChEBI" id="CHEBI:61036"/>
        <dbReference type="ChEBI" id="CHEBI:456216"/>
        <dbReference type="EC" id="6.3.4.20"/>
    </reaction>
</comment>
<comment type="cofactor">
    <cofactor evidence="1">
        <name>Zn(2+)</name>
        <dbReference type="ChEBI" id="CHEBI:29105"/>
    </cofactor>
    <text evidence="1">Binds 1 zinc ion per subunit.</text>
</comment>
<comment type="pathway">
    <text evidence="1">Purine metabolism; 7-cyano-7-deazaguanine biosynthesis.</text>
</comment>
<comment type="similarity">
    <text evidence="1">Belongs to the QueC family.</text>
</comment>
<name>QUEC_PSEA8</name>
<gene>
    <name evidence="1" type="primary">queC</name>
    <name type="ordered locus">PLES_43381</name>
</gene>
<keyword id="KW-0067">ATP-binding</keyword>
<keyword id="KW-0436">Ligase</keyword>
<keyword id="KW-0479">Metal-binding</keyword>
<keyword id="KW-0547">Nucleotide-binding</keyword>
<keyword id="KW-0671">Queuosine biosynthesis</keyword>
<keyword id="KW-0862">Zinc</keyword>
<organism>
    <name type="scientific">Pseudomonas aeruginosa (strain LESB58)</name>
    <dbReference type="NCBI Taxonomy" id="557722"/>
    <lineage>
        <taxon>Bacteria</taxon>
        <taxon>Pseudomonadati</taxon>
        <taxon>Pseudomonadota</taxon>
        <taxon>Gammaproteobacteria</taxon>
        <taxon>Pseudomonadales</taxon>
        <taxon>Pseudomonadaceae</taxon>
        <taxon>Pseudomonas</taxon>
    </lineage>
</organism>
<dbReference type="EC" id="6.3.4.20" evidence="1"/>
<dbReference type="EMBL" id="FM209186">
    <property type="protein sequence ID" value="CAW29093.1"/>
    <property type="molecule type" value="Genomic_DNA"/>
</dbReference>
<dbReference type="RefSeq" id="WP_003111415.1">
    <property type="nucleotide sequence ID" value="NC_011770.1"/>
</dbReference>
<dbReference type="SMR" id="B7UXV6"/>
<dbReference type="KEGG" id="pag:PLES_43381"/>
<dbReference type="HOGENOM" id="CLU_081854_1_1_6"/>
<dbReference type="UniPathway" id="UPA00391"/>
<dbReference type="GO" id="GO:0005524">
    <property type="term" value="F:ATP binding"/>
    <property type="evidence" value="ECO:0007669"/>
    <property type="project" value="UniProtKB-UniRule"/>
</dbReference>
<dbReference type="GO" id="GO:0016879">
    <property type="term" value="F:ligase activity, forming carbon-nitrogen bonds"/>
    <property type="evidence" value="ECO:0007669"/>
    <property type="project" value="UniProtKB-UniRule"/>
</dbReference>
<dbReference type="GO" id="GO:0008270">
    <property type="term" value="F:zinc ion binding"/>
    <property type="evidence" value="ECO:0007669"/>
    <property type="project" value="UniProtKB-UniRule"/>
</dbReference>
<dbReference type="GO" id="GO:0008616">
    <property type="term" value="P:queuosine biosynthetic process"/>
    <property type="evidence" value="ECO:0007669"/>
    <property type="project" value="UniProtKB-UniRule"/>
</dbReference>
<dbReference type="CDD" id="cd01995">
    <property type="entry name" value="QueC-like"/>
    <property type="match status" value="1"/>
</dbReference>
<dbReference type="FunFam" id="3.40.50.620:FF:000131">
    <property type="entry name" value="7-cyano-7-deazaguanine synthase"/>
    <property type="match status" value="1"/>
</dbReference>
<dbReference type="Gene3D" id="3.40.50.620">
    <property type="entry name" value="HUPs"/>
    <property type="match status" value="1"/>
</dbReference>
<dbReference type="HAMAP" id="MF_01633">
    <property type="entry name" value="QueC"/>
    <property type="match status" value="1"/>
</dbReference>
<dbReference type="InterPro" id="IPR018317">
    <property type="entry name" value="QueC"/>
</dbReference>
<dbReference type="InterPro" id="IPR014729">
    <property type="entry name" value="Rossmann-like_a/b/a_fold"/>
</dbReference>
<dbReference type="NCBIfam" id="TIGR00364">
    <property type="entry name" value="7-cyano-7-deazaguanine synthase QueC"/>
    <property type="match status" value="1"/>
</dbReference>
<dbReference type="PANTHER" id="PTHR42914">
    <property type="entry name" value="7-CYANO-7-DEAZAGUANINE SYNTHASE"/>
    <property type="match status" value="1"/>
</dbReference>
<dbReference type="PANTHER" id="PTHR42914:SF1">
    <property type="entry name" value="7-CYANO-7-DEAZAGUANINE SYNTHASE"/>
    <property type="match status" value="1"/>
</dbReference>
<dbReference type="Pfam" id="PF06508">
    <property type="entry name" value="QueC"/>
    <property type="match status" value="1"/>
</dbReference>
<dbReference type="PIRSF" id="PIRSF006293">
    <property type="entry name" value="ExsB"/>
    <property type="match status" value="1"/>
</dbReference>
<dbReference type="SUPFAM" id="SSF52402">
    <property type="entry name" value="Adenine nucleotide alpha hydrolases-like"/>
    <property type="match status" value="1"/>
</dbReference>
<protein>
    <recommendedName>
        <fullName evidence="1">7-cyano-7-deazaguanine synthase</fullName>
        <ecNumber evidence="1">6.3.4.20</ecNumber>
    </recommendedName>
    <alternativeName>
        <fullName evidence="1">7-cyano-7-carbaguanine synthase</fullName>
    </alternativeName>
    <alternativeName>
        <fullName evidence="1">PreQ(0) synthase</fullName>
    </alternativeName>
    <alternativeName>
        <fullName evidence="1">Queuosine biosynthesis protein QueC</fullName>
    </alternativeName>
</protein>
<reference key="1">
    <citation type="journal article" date="2009" name="Genome Res.">
        <title>Newly introduced genomic prophage islands are critical determinants of in vivo competitiveness in the Liverpool epidemic strain of Pseudomonas aeruginosa.</title>
        <authorList>
            <person name="Winstanley C."/>
            <person name="Langille M.G.I."/>
            <person name="Fothergill J.L."/>
            <person name="Kukavica-Ibrulj I."/>
            <person name="Paradis-Bleau C."/>
            <person name="Sanschagrin F."/>
            <person name="Thomson N.R."/>
            <person name="Winsor G.L."/>
            <person name="Quail M.A."/>
            <person name="Lennard N."/>
            <person name="Bignell A."/>
            <person name="Clarke L."/>
            <person name="Seeger K."/>
            <person name="Saunders D."/>
            <person name="Harris D."/>
            <person name="Parkhill J."/>
            <person name="Hancock R.E.W."/>
            <person name="Brinkman F.S.L."/>
            <person name="Levesque R.C."/>
        </authorList>
    </citation>
    <scope>NUCLEOTIDE SEQUENCE [LARGE SCALE GENOMIC DNA]</scope>
    <source>
        <strain>LESB58</strain>
    </source>
</reference>
<sequence>MNQKKAVILLSGGLDSATVVAMAKADGYACYTMSFDYGQRHRAELQAAERVARQLGVIEHKVIGLDLNGMGGSALTDESIAVPESPSEGIPVTYVPARNTVFLSLALGWAEVLDARDIFIGVNAVDYSGYPDCRPEFVEAFERMANLATKAGVEGNGFRIQAPLQYLSKAQIIQAGVARGVDYGLTVSCYQADEQGRACGKCDSCRLRADGFAAAGISDPTPYF</sequence>
<proteinExistence type="inferred from homology"/>
<accession>B7UXV6</accession>
<feature type="chain" id="PRO_1000186621" description="7-cyano-7-deazaguanine synthase">
    <location>
        <begin position="1"/>
        <end position="224"/>
    </location>
</feature>
<feature type="binding site" evidence="1">
    <location>
        <begin position="10"/>
        <end position="20"/>
    </location>
    <ligand>
        <name>ATP</name>
        <dbReference type="ChEBI" id="CHEBI:30616"/>
    </ligand>
</feature>
<feature type="binding site" evidence="1">
    <location>
        <position position="189"/>
    </location>
    <ligand>
        <name>Zn(2+)</name>
        <dbReference type="ChEBI" id="CHEBI:29105"/>
    </ligand>
</feature>
<feature type="binding site" evidence="1">
    <location>
        <position position="199"/>
    </location>
    <ligand>
        <name>Zn(2+)</name>
        <dbReference type="ChEBI" id="CHEBI:29105"/>
    </ligand>
</feature>
<feature type="binding site" evidence="1">
    <location>
        <position position="202"/>
    </location>
    <ligand>
        <name>Zn(2+)</name>
        <dbReference type="ChEBI" id="CHEBI:29105"/>
    </ligand>
</feature>
<feature type="binding site" evidence="1">
    <location>
        <position position="205"/>
    </location>
    <ligand>
        <name>Zn(2+)</name>
        <dbReference type="ChEBI" id="CHEBI:29105"/>
    </ligand>
</feature>